<dbReference type="EMBL" id="X05509">
    <property type="protein sequence ID" value="CAA29053.1"/>
    <property type="molecule type" value="Genomic_DNA"/>
</dbReference>
<dbReference type="EMBL" id="Z38061">
    <property type="protein sequence ID" value="CAA86181.1"/>
    <property type="molecule type" value="Genomic_DNA"/>
</dbReference>
<dbReference type="EMBL" id="BK006942">
    <property type="protein sequence ID" value="DAA08567.1"/>
    <property type="molecule type" value="Genomic_DNA"/>
</dbReference>
<dbReference type="PIR" id="S48483">
    <property type="entry name" value="S48483"/>
</dbReference>
<dbReference type="RefSeq" id="NP_012287.3">
    <property type="nucleotide sequence ID" value="NM_001179543.3"/>
</dbReference>
<dbReference type="SMR" id="P07266"/>
<dbReference type="BioGRID" id="35012">
    <property type="interactions" value="95"/>
</dbReference>
<dbReference type="ComplexPortal" id="CPX-1331">
    <property type="entry name" value="bI3 intron splicing factor complex"/>
</dbReference>
<dbReference type="DIP" id="DIP-5607N"/>
<dbReference type="FunCoup" id="P07266">
    <property type="interactions" value="58"/>
</dbReference>
<dbReference type="IntAct" id="P07266">
    <property type="interactions" value="2"/>
</dbReference>
<dbReference type="MINT" id="P07266"/>
<dbReference type="STRING" id="4932.YIR021W"/>
<dbReference type="iPTMnet" id="P07266"/>
<dbReference type="PaxDb" id="4932-YIR021W"/>
<dbReference type="PeptideAtlas" id="P07266"/>
<dbReference type="EnsemblFungi" id="YIR021W_mRNA">
    <property type="protein sequence ID" value="YIR021W"/>
    <property type="gene ID" value="YIR021W"/>
</dbReference>
<dbReference type="GeneID" id="854839"/>
<dbReference type="KEGG" id="sce:YIR021W"/>
<dbReference type="AGR" id="SGD:S000001460"/>
<dbReference type="SGD" id="S000001460">
    <property type="gene designation" value="MRS1"/>
</dbReference>
<dbReference type="VEuPathDB" id="FungiDB:YIR021W"/>
<dbReference type="eggNOG" id="ENOG502S46R">
    <property type="taxonomic scope" value="Eukaryota"/>
</dbReference>
<dbReference type="GeneTree" id="ENSGT00940000176739"/>
<dbReference type="HOGENOM" id="CLU_055501_0_0_1"/>
<dbReference type="InParanoid" id="P07266"/>
<dbReference type="OMA" id="DIDPLMC"/>
<dbReference type="OrthoDB" id="4041867at2759"/>
<dbReference type="BioCyc" id="YEAST:G3O-31441-MONOMER"/>
<dbReference type="BioGRID-ORCS" id="854839">
    <property type="hits" value="5 hits in 10 CRISPR screens"/>
</dbReference>
<dbReference type="PRO" id="PR:P07266"/>
<dbReference type="Proteomes" id="UP000002311">
    <property type="component" value="Chromosome IX"/>
</dbReference>
<dbReference type="RNAct" id="P07266">
    <property type="molecule type" value="protein"/>
</dbReference>
<dbReference type="GO" id="GO:0005759">
    <property type="term" value="C:mitochondrial matrix"/>
    <property type="evidence" value="ECO:0007669"/>
    <property type="project" value="UniProtKB-SubCell"/>
</dbReference>
<dbReference type="GO" id="GO:0005739">
    <property type="term" value="C:mitochondrion"/>
    <property type="evidence" value="ECO:0007005"/>
    <property type="project" value="SGD"/>
</dbReference>
<dbReference type="GO" id="GO:1990904">
    <property type="term" value="C:ribonucleoprotein complex"/>
    <property type="evidence" value="ECO:0000314"/>
    <property type="project" value="SGD"/>
</dbReference>
<dbReference type="GO" id="GO:0000402">
    <property type="term" value="F:crossed form four-way junction DNA binding"/>
    <property type="evidence" value="ECO:0000318"/>
    <property type="project" value="GO_Central"/>
</dbReference>
<dbReference type="GO" id="GO:0004520">
    <property type="term" value="F:DNA endonuclease activity"/>
    <property type="evidence" value="ECO:0000318"/>
    <property type="project" value="GO_Central"/>
</dbReference>
<dbReference type="GO" id="GO:0070336">
    <property type="term" value="F:flap-structured DNA binding"/>
    <property type="evidence" value="ECO:0000318"/>
    <property type="project" value="GO_Central"/>
</dbReference>
<dbReference type="GO" id="GO:0003723">
    <property type="term" value="F:RNA binding"/>
    <property type="evidence" value="ECO:0000314"/>
    <property type="project" value="SGD"/>
</dbReference>
<dbReference type="GO" id="GO:0000403">
    <property type="term" value="F:Y-form DNA binding"/>
    <property type="evidence" value="ECO:0000318"/>
    <property type="project" value="GO_Central"/>
</dbReference>
<dbReference type="GO" id="GO:0000372">
    <property type="term" value="P:Group I intron splicing"/>
    <property type="evidence" value="ECO:0000314"/>
    <property type="project" value="ComplexPortal"/>
</dbReference>
<dbReference type="GO" id="GO:0000002">
    <property type="term" value="P:mitochondrial genome maintenance"/>
    <property type="evidence" value="ECO:0000318"/>
    <property type="project" value="GO_Central"/>
</dbReference>
<dbReference type="GO" id="GO:0000963">
    <property type="term" value="P:mitochondrial RNA processing"/>
    <property type="evidence" value="ECO:0000315"/>
    <property type="project" value="SGD"/>
</dbReference>
<dbReference type="GO" id="GO:0006397">
    <property type="term" value="P:mRNA processing"/>
    <property type="evidence" value="ECO:0000314"/>
    <property type="project" value="ComplexPortal"/>
</dbReference>
<dbReference type="InterPro" id="IPR039197">
    <property type="entry name" value="Mrs1/Cce1"/>
</dbReference>
<dbReference type="InterPro" id="IPR015242">
    <property type="entry name" value="Ydc2_cat"/>
</dbReference>
<dbReference type="PANTHER" id="PTHR28072">
    <property type="entry name" value="CRUCIFORM CUTTING ENDONUCLEASE 1, MITOCHONDRIAL-RELATED"/>
    <property type="match status" value="1"/>
</dbReference>
<dbReference type="PANTHER" id="PTHR28072:SF1">
    <property type="entry name" value="CRUCIFORM CUTTING ENDONUCLEASE 1, MITOCHONDRIAL-RELATED"/>
    <property type="match status" value="1"/>
</dbReference>
<dbReference type="Pfam" id="PF09159">
    <property type="entry name" value="Ydc2-catalyt"/>
    <property type="match status" value="1"/>
</dbReference>
<name>MRS1_YEAST</name>
<gene>
    <name type="primary">MRS1</name>
    <name type="synonym">PET157</name>
    <name type="ordered locus">YIR021W</name>
</gene>
<keyword id="KW-0496">Mitochondrion</keyword>
<keyword id="KW-0507">mRNA processing</keyword>
<keyword id="KW-1185">Reference proteome</keyword>
<organism>
    <name type="scientific">Saccharomyces cerevisiae (strain ATCC 204508 / S288c)</name>
    <name type="common">Baker's yeast</name>
    <dbReference type="NCBI Taxonomy" id="559292"/>
    <lineage>
        <taxon>Eukaryota</taxon>
        <taxon>Fungi</taxon>
        <taxon>Dikarya</taxon>
        <taxon>Ascomycota</taxon>
        <taxon>Saccharomycotina</taxon>
        <taxon>Saccharomycetes</taxon>
        <taxon>Saccharomycetales</taxon>
        <taxon>Saccharomycetaceae</taxon>
        <taxon>Saccharomyces</taxon>
    </lineage>
</organism>
<evidence type="ECO:0000269" key="1">
    <source>
    </source>
</evidence>
<evidence type="ECO:0000269" key="2">
    <source>
    </source>
</evidence>
<evidence type="ECO:0000269" key="3">
    <source>
    </source>
</evidence>
<evidence type="ECO:0000269" key="4">
    <source>
    </source>
</evidence>
<evidence type="ECO:0000305" key="5"/>
<reference key="1">
    <citation type="journal article" date="1987" name="EMBO J.">
        <title>A yeast nuclear gene, MRS1, involved in mitochondrial RNA splicing: nucleotide sequence and mutational analysis of two overlapping open reading frames on opposite strands.</title>
        <authorList>
            <person name="Kreike J."/>
            <person name="Schulze M."/>
            <person name="Ahne F."/>
            <person name="Lang B.F."/>
        </authorList>
    </citation>
    <scope>NUCLEOTIDE SEQUENCE [GENOMIC DNA]</scope>
</reference>
<reference key="2">
    <citation type="journal article" date="1997" name="Nature">
        <title>The nucleotide sequence of Saccharomyces cerevisiae chromosome IX.</title>
        <authorList>
            <person name="Churcher C.M."/>
            <person name="Bowman S."/>
            <person name="Badcock K."/>
            <person name="Bankier A.T."/>
            <person name="Brown D."/>
            <person name="Chillingworth T."/>
            <person name="Connor R."/>
            <person name="Devlin K."/>
            <person name="Gentles S."/>
            <person name="Hamlin N."/>
            <person name="Harris D.E."/>
            <person name="Horsnell T."/>
            <person name="Hunt S."/>
            <person name="Jagels K."/>
            <person name="Jones M."/>
            <person name="Lye G."/>
            <person name="Moule S."/>
            <person name="Odell C."/>
            <person name="Pearson D."/>
            <person name="Rajandream M.A."/>
            <person name="Rice P."/>
            <person name="Rowley N."/>
            <person name="Skelton J."/>
            <person name="Smith V."/>
            <person name="Walsh S.V."/>
            <person name="Whitehead S."/>
            <person name="Barrell B.G."/>
        </authorList>
    </citation>
    <scope>NUCLEOTIDE SEQUENCE [LARGE SCALE GENOMIC DNA]</scope>
    <source>
        <strain>ATCC 204508 / S288c</strain>
    </source>
</reference>
<reference key="3">
    <citation type="journal article" date="2014" name="G3 (Bethesda)">
        <title>The reference genome sequence of Saccharomyces cerevisiae: Then and now.</title>
        <authorList>
            <person name="Engel S.R."/>
            <person name="Dietrich F.S."/>
            <person name="Fisk D.G."/>
            <person name="Binkley G."/>
            <person name="Balakrishnan R."/>
            <person name="Costanzo M.C."/>
            <person name="Dwight S.S."/>
            <person name="Hitz B.C."/>
            <person name="Karra K."/>
            <person name="Nash R.S."/>
            <person name="Weng S."/>
            <person name="Wong E.D."/>
            <person name="Lloyd P."/>
            <person name="Skrzypek M.S."/>
            <person name="Miyasato S.R."/>
            <person name="Simison M."/>
            <person name="Cherry J.M."/>
        </authorList>
    </citation>
    <scope>GENOME REANNOTATION</scope>
    <source>
        <strain>ATCC 204508 / S288c</strain>
    </source>
</reference>
<reference key="4">
    <citation type="journal article" date="1990" name="Curr. Genet.">
        <title>Two group I mitochondrial introns in the cob-box and coxI genes require the same MRS1/PET157 nuclear gene product for splicing.</title>
        <authorList>
            <person name="Bousquet I."/>
            <person name="Dujardin G."/>
            <person name="Poyton R.O."/>
            <person name="Slonimski P.P."/>
        </authorList>
    </citation>
    <scope>CHARACTERIZATION</scope>
</reference>
<reference key="5">
    <citation type="journal article" date="2002" name="Proc. Natl. Acad. Sci. U.S.A.">
        <title>Recruitment of intron-encoded and co-opted proteins in splicing of the bI3 group I intron RNA.</title>
        <authorList>
            <person name="Bassi G.S."/>
            <person name="de Oliveira D.M."/>
            <person name="White M.F."/>
            <person name="Weeks K.M."/>
        </authorList>
    </citation>
    <scope>FUNCTION</scope>
    <scope>SUBUNIT</scope>
</reference>
<reference key="6">
    <citation type="journal article" date="2003" name="Nature">
        <title>Global analysis of protein localization in budding yeast.</title>
        <authorList>
            <person name="Huh W.-K."/>
            <person name="Falvo J.V."/>
            <person name="Gerke L.C."/>
            <person name="Carroll A.S."/>
            <person name="Howson R.W."/>
            <person name="Weissman J.S."/>
            <person name="O'Shea E.K."/>
        </authorList>
    </citation>
    <scope>SUBCELLULAR LOCATION [LARGE SCALE ANALYSIS]</scope>
</reference>
<reference key="7">
    <citation type="journal article" date="2003" name="Nature">
        <title>Global analysis of protein expression in yeast.</title>
        <authorList>
            <person name="Ghaemmaghami S."/>
            <person name="Huh W.-K."/>
            <person name="Bower K."/>
            <person name="Howson R.W."/>
            <person name="Belle A."/>
            <person name="Dephoure N."/>
            <person name="O'Shea E.K."/>
            <person name="Weissman J.S."/>
        </authorList>
    </citation>
    <scope>LEVEL OF PROTEIN EXPRESSION [LARGE SCALE ANALYSIS]</scope>
</reference>
<reference key="8">
    <citation type="journal article" date="2003" name="Proc. Natl. Acad. Sci. U.S.A.">
        <title>The proteome of Saccharomyces cerevisiae mitochondria.</title>
        <authorList>
            <person name="Sickmann A."/>
            <person name="Reinders J."/>
            <person name="Wagner Y."/>
            <person name="Joppich C."/>
            <person name="Zahedi R.P."/>
            <person name="Meyer H.E."/>
            <person name="Schoenfisch B."/>
            <person name="Perschil I."/>
            <person name="Chacinska A."/>
            <person name="Guiard B."/>
            <person name="Rehling P."/>
            <person name="Pfanner N."/>
            <person name="Meisinger C."/>
        </authorList>
    </citation>
    <scope>SUBCELLULAR LOCATION [LARGE SCALE ANALYSIS]</scope>
    <source>
        <strain>ATCC 76625 / YPH499</strain>
    </source>
</reference>
<feature type="chain" id="PRO_0000096580" description="Mitochondrial RNA-splicing protein MRS1">
    <location>
        <begin position="1"/>
        <end position="363"/>
    </location>
</feature>
<feature type="sequence conflict" description="In Ref. 1; CAA29053." evidence="5" ref="1">
    <original>S</original>
    <variation>P</variation>
    <location>
        <position position="182"/>
    </location>
</feature>
<feature type="sequence conflict" description="In Ref. 1; CAA29053." evidence="5" ref="1">
    <original>V</original>
    <variation>A</variation>
    <location>
        <position position="318"/>
    </location>
</feature>
<proteinExistence type="evidence at protein level"/>
<protein>
    <recommendedName>
        <fullName>Mitochondrial RNA-splicing protein MRS1</fullName>
    </recommendedName>
</protein>
<sequence length="363" mass="41290">MSPKNITRSVIPAIDLYCRKANFKTLKSLSMILGSKKEWYDTKKAPLRTFLVSRCGIFEQLRGRLVEDGKVNLFSVFLTNDSFSFCKMTVDDKFNTSLVDWQKIPFDSTFATDRRQNISLLPVDTLFATEKIISILGVSPNMTNLVSIERERSDLVDFNCKLQSNILEHLLYAKCQGVYVTSTNEKARLLAAVCNPEFIDTFWCELTPIRVSLKENPSISVPREYQMYDPVVRATIKEVVTKRLLRSAFDNDIDPLMCLHLDKGWKLKFPILSSTTGLNFSLKDCLSLDTGKDASDMTEVFLATMESSKVLRTYSNLVDIVMKDNGRLDSGVLKQFNDYVKQEKLNLQHFQAGSSKFLKGAKI</sequence>
<comment type="function">
    <text evidence="1">Function in mitochondrial RNA splicing in the excision of mitochondrial group I introns aI5 beta from COX1 and bI3 from COB transcripts and thus would be involved in obtaining the correct structure of the intron, to allow the RNA catalyzed reactions to occur.</text>
</comment>
<comment type="subunit">
    <text evidence="1">Homodimer. Forms a ribonucleoprotein complex composed of maturase bI3 and 2 dimers of MRS1 that assemble around the bI3 RNA.</text>
</comment>
<comment type="subcellular location">
    <subcellularLocation>
        <location evidence="2 4">Mitochondrion matrix</location>
    </subcellularLocation>
</comment>
<comment type="miscellaneous">
    <text evidence="3">Present with 5240 molecules/cell in log phase SD medium.</text>
</comment>
<accession>P07266</accession>
<accession>D6VVV1</accession>